<protein>
    <recommendedName>
        <fullName evidence="1">Probable Fe(2+)-trafficking protein</fullName>
    </recommendedName>
</protein>
<evidence type="ECO:0000255" key="1">
    <source>
        <dbReference type="HAMAP-Rule" id="MF_00686"/>
    </source>
</evidence>
<reference key="1">
    <citation type="journal article" date="2008" name="Appl. Environ. Microbiol.">
        <title>The genome of Polaromonas sp. strain JS666: insights into the evolution of a hydrocarbon- and xenobiotic-degrading bacterium, and features of relevance to biotechnology.</title>
        <authorList>
            <person name="Mattes T.E."/>
            <person name="Alexander A.K."/>
            <person name="Richardson P.M."/>
            <person name="Munk A.C."/>
            <person name="Han C.S."/>
            <person name="Stothard P."/>
            <person name="Coleman N.V."/>
        </authorList>
    </citation>
    <scope>NUCLEOTIDE SEQUENCE [LARGE SCALE GENOMIC DNA]</scope>
    <source>
        <strain>JS666 / ATCC BAA-500</strain>
    </source>
</reference>
<dbReference type="EMBL" id="CP000316">
    <property type="protein sequence ID" value="ABE44267.1"/>
    <property type="molecule type" value="Genomic_DNA"/>
</dbReference>
<dbReference type="RefSeq" id="WP_011483265.1">
    <property type="nucleotide sequence ID" value="NC_007948.1"/>
</dbReference>
<dbReference type="SMR" id="Q12B25"/>
<dbReference type="STRING" id="296591.Bpro_2344"/>
<dbReference type="KEGG" id="pol:Bpro_2344"/>
<dbReference type="eggNOG" id="COG2924">
    <property type="taxonomic scope" value="Bacteria"/>
</dbReference>
<dbReference type="HOGENOM" id="CLU_170994_0_0_4"/>
<dbReference type="OrthoDB" id="9804318at2"/>
<dbReference type="Proteomes" id="UP000001983">
    <property type="component" value="Chromosome"/>
</dbReference>
<dbReference type="GO" id="GO:0005829">
    <property type="term" value="C:cytosol"/>
    <property type="evidence" value="ECO:0007669"/>
    <property type="project" value="TreeGrafter"/>
</dbReference>
<dbReference type="GO" id="GO:0005506">
    <property type="term" value="F:iron ion binding"/>
    <property type="evidence" value="ECO:0007669"/>
    <property type="project" value="UniProtKB-UniRule"/>
</dbReference>
<dbReference type="GO" id="GO:0034599">
    <property type="term" value="P:cellular response to oxidative stress"/>
    <property type="evidence" value="ECO:0007669"/>
    <property type="project" value="TreeGrafter"/>
</dbReference>
<dbReference type="FunFam" id="1.10.3880.10:FF:000001">
    <property type="entry name" value="Probable Fe(2+)-trafficking protein"/>
    <property type="match status" value="1"/>
</dbReference>
<dbReference type="Gene3D" id="1.10.3880.10">
    <property type="entry name" value="Fe(II) trafficking protein YggX"/>
    <property type="match status" value="1"/>
</dbReference>
<dbReference type="HAMAP" id="MF_00686">
    <property type="entry name" value="Fe_traffic_YggX"/>
    <property type="match status" value="1"/>
</dbReference>
<dbReference type="InterPro" id="IPR007457">
    <property type="entry name" value="Fe_traffick_prot_YggX"/>
</dbReference>
<dbReference type="InterPro" id="IPR036766">
    <property type="entry name" value="Fe_traffick_prot_YggX_sf"/>
</dbReference>
<dbReference type="NCBIfam" id="NF003817">
    <property type="entry name" value="PRK05408.1"/>
    <property type="match status" value="1"/>
</dbReference>
<dbReference type="PANTHER" id="PTHR36965">
    <property type="entry name" value="FE(2+)-TRAFFICKING PROTEIN-RELATED"/>
    <property type="match status" value="1"/>
</dbReference>
<dbReference type="PANTHER" id="PTHR36965:SF1">
    <property type="entry name" value="FE(2+)-TRAFFICKING PROTEIN-RELATED"/>
    <property type="match status" value="1"/>
</dbReference>
<dbReference type="Pfam" id="PF04362">
    <property type="entry name" value="Iron_traffic"/>
    <property type="match status" value="1"/>
</dbReference>
<dbReference type="PIRSF" id="PIRSF029827">
    <property type="entry name" value="Fe_traffic_YggX"/>
    <property type="match status" value="1"/>
</dbReference>
<dbReference type="SUPFAM" id="SSF111148">
    <property type="entry name" value="YggX-like"/>
    <property type="match status" value="1"/>
</dbReference>
<keyword id="KW-0408">Iron</keyword>
<keyword id="KW-1185">Reference proteome</keyword>
<comment type="function">
    <text evidence="1">Could be a mediator in iron transactions between iron acquisition and iron-requiring processes, such as synthesis and/or repair of Fe-S clusters in biosynthetic enzymes.</text>
</comment>
<comment type="similarity">
    <text evidence="1">Belongs to the Fe(2+)-trafficking protein family.</text>
</comment>
<organism>
    <name type="scientific">Polaromonas sp. (strain JS666 / ATCC BAA-500)</name>
    <dbReference type="NCBI Taxonomy" id="296591"/>
    <lineage>
        <taxon>Bacteria</taxon>
        <taxon>Pseudomonadati</taxon>
        <taxon>Pseudomonadota</taxon>
        <taxon>Betaproteobacteria</taxon>
        <taxon>Burkholderiales</taxon>
        <taxon>Comamonadaceae</taxon>
        <taxon>Polaromonas</taxon>
    </lineage>
</organism>
<sequence length="90" mass="10282">MARMVKCIKLGREAEGLDFPPYPGPLGKRLWEEVSKEAWADWMKQQTMLVNENRLNLADARARQYLARQMEKHFFGDGADAVQGYVPPSA</sequence>
<gene>
    <name type="ordered locus">Bpro_2344</name>
</gene>
<accession>Q12B25</accession>
<proteinExistence type="inferred from homology"/>
<name>FETP_POLSJ</name>
<feature type="chain" id="PRO_1000045050" description="Probable Fe(2+)-trafficking protein">
    <location>
        <begin position="1"/>
        <end position="90"/>
    </location>
</feature>